<gene>
    <name evidence="1" type="primary">FADS3</name>
</gene>
<feature type="chain" id="PRO_0000307107" description="Fatty acid desaturase 3">
    <location>
        <begin position="1"/>
        <end position="443"/>
    </location>
</feature>
<feature type="topological domain" description="Cytoplasmic" evidence="5">
    <location>
        <begin position="1"/>
        <end position="130"/>
    </location>
</feature>
<feature type="transmembrane region" description="Helical" evidence="3">
    <location>
        <begin position="131"/>
        <end position="151"/>
    </location>
</feature>
<feature type="topological domain" description="Lumenal" evidence="5">
    <location>
        <position position="152"/>
    </location>
</feature>
<feature type="transmembrane region" description="Helical" evidence="3">
    <location>
        <begin position="153"/>
        <end position="173"/>
    </location>
</feature>
<feature type="topological domain" description="Cytoplasmic" evidence="5">
    <location>
        <begin position="174"/>
        <end position="259"/>
    </location>
</feature>
<feature type="transmembrane region" description="Helical" evidence="3">
    <location>
        <begin position="260"/>
        <end position="280"/>
    </location>
</feature>
<feature type="topological domain" description="Lumenal" evidence="5">
    <location>
        <begin position="281"/>
        <end position="282"/>
    </location>
</feature>
<feature type="transmembrane region" description="Helical" evidence="3">
    <location>
        <begin position="283"/>
        <end position="303"/>
    </location>
</feature>
<feature type="topological domain" description="Cytoplasmic" evidence="5">
    <location>
        <position position="304"/>
    </location>
</feature>
<feature type="transmembrane region" description="Helical" evidence="3">
    <location>
        <begin position="305"/>
        <end position="325"/>
    </location>
</feature>
<feature type="topological domain" description="Lumenal" evidence="5">
    <location>
        <begin position="326"/>
        <end position="443"/>
    </location>
</feature>
<feature type="domain" description="Cytochrome b5 heme-binding" evidence="4">
    <location>
        <begin position="18"/>
        <end position="95"/>
    </location>
</feature>
<feature type="short sequence motif" description="Histidine box-1" evidence="2">
    <location>
        <begin position="180"/>
        <end position="184"/>
    </location>
</feature>
<feature type="short sequence motif" description="Histidine box-2" evidence="2">
    <location>
        <begin position="217"/>
        <end position="221"/>
    </location>
</feature>
<feature type="short sequence motif" description="Histidine box-3" evidence="2">
    <location>
        <begin position="381"/>
        <end position="385"/>
    </location>
</feature>
<protein>
    <recommendedName>
        <fullName evidence="1">Fatty acid desaturase 3</fullName>
        <shortName>FADS3</shortName>
        <ecNumber evidence="1">1.14.19.-</ecNumber>
    </recommendedName>
    <alternativeName>
        <fullName evidence="1">Delta(13) fatty acid desaturase</fullName>
        <shortName evidence="1">Delta(13) desaturase</shortName>
    </alternativeName>
</protein>
<comment type="function">
    <text evidence="1 2">Mammals have different sphingoid bases that differ in their length and/or pattern of desaturation and hydroxyl groups. The predominant sphingoid base that comprises mammalian ceramides is sphing-4-enine (sphingosine or SPH) which has a trans (E) desaturation at carbon 4. FADS3 is a desaturase that introduces a cis (Z) double bond between carbon 14 and carbon 15 of the sphingoid base (also known as long chain base, LCB), producing LCBs such as sphinga-4,14-dienine (SPD, d18:2(4E,14Z)) from SPH. Prefers SPH-containing ceramides (N-acylsphing-4-enines) as substrates. Capable of metabolizing also the SPH in its free form. SPD ceramides occur widely in mammalian tissues and cells. Due to their unusual structure containing a cis double bond, SPD ceramides may have an opposite, negative role in lipid microdomain formation relative to conventional ceramides. Could be involved in the detoxification of 1-deoxy sphingolipids, by desaturating the cytotoxic 1-deoxysphinganine (1-deoxySA, m18:0), produced under pathological conditions, to 1-deoxysphingenine (1-deoxysphingosine, 1-deoxySO, m18:1). Although prefers SPH-containing ceramides (N-acylsphing-4-enines) as substrates, it also exhibits activity toward dihydrosphingosine-containing CERs (N-acylsphinganines) and produces 14Z-SPH-containing sphingolipids. Its desaturase mechanism involves an electron transfer facilitated by cytochrome b5 (By similarity). FADS3 also acts as a methyl-end fatty acyl coenzyme A (CoA) desaturase that introduces a cis double bond between the preexisting double bond and the terminal methyl group of the fatty acyl chain. Desaturates (11E)-octadecenoate (trans-vaccenoate, the predominant trans fatty acid in human milk) at carbon 13 to generate (11E,13Z)-octadecadienoate (also known as conjugated linoleic acid 11E,13Z-CLA) (By similarity).</text>
</comment>
<comment type="catalytic activity">
    <reaction evidence="2">
        <text>an N-acylsphing-4-enine + 2 Fe(II)-[cytochrome b5] + O2 + 2 H(+) = an N-acyl-sphinga-4E,14Z-dienine + 2 Fe(III)-[cytochrome b5] + 2 H2O</text>
        <dbReference type="Rhea" id="RHEA:63928"/>
        <dbReference type="Rhea" id="RHEA-COMP:10438"/>
        <dbReference type="Rhea" id="RHEA-COMP:10439"/>
        <dbReference type="ChEBI" id="CHEBI:15377"/>
        <dbReference type="ChEBI" id="CHEBI:15378"/>
        <dbReference type="ChEBI" id="CHEBI:15379"/>
        <dbReference type="ChEBI" id="CHEBI:29033"/>
        <dbReference type="ChEBI" id="CHEBI:29034"/>
        <dbReference type="ChEBI" id="CHEBI:52639"/>
        <dbReference type="ChEBI" id="CHEBI:139573"/>
    </reaction>
    <physiologicalReaction direction="left-to-right" evidence="2">
        <dbReference type="Rhea" id="RHEA:63929"/>
    </physiologicalReaction>
</comment>
<comment type="catalytic activity">
    <reaction evidence="2">
        <text>N-(hexanoyl)sphing-4-enine + 2 Fe(II)-[cytochrome b5] + O2 + 2 H(+) = N-hexanoyl-sphinga-4E,14Z-dienine + 2 Fe(III)-[cytochrome b5] + 2 H2O</text>
        <dbReference type="Rhea" id="RHEA:63940"/>
        <dbReference type="Rhea" id="RHEA-COMP:10438"/>
        <dbReference type="Rhea" id="RHEA-COMP:10439"/>
        <dbReference type="ChEBI" id="CHEBI:15377"/>
        <dbReference type="ChEBI" id="CHEBI:15378"/>
        <dbReference type="ChEBI" id="CHEBI:15379"/>
        <dbReference type="ChEBI" id="CHEBI:29033"/>
        <dbReference type="ChEBI" id="CHEBI:29034"/>
        <dbReference type="ChEBI" id="CHEBI:63867"/>
        <dbReference type="ChEBI" id="CHEBI:149631"/>
    </reaction>
    <physiologicalReaction direction="left-to-right" evidence="2">
        <dbReference type="Rhea" id="RHEA:63941"/>
    </physiologicalReaction>
</comment>
<comment type="catalytic activity">
    <reaction evidence="2">
        <text>sphing-4-enine + 2 Fe(II)-[cytochrome b5] + O2 + 2 H(+) = sphinga-4E,14Z-dienine + 2 Fe(III)-[cytochrome b5] + 2 H2O</text>
        <dbReference type="Rhea" id="RHEA:76483"/>
        <dbReference type="Rhea" id="RHEA-COMP:10438"/>
        <dbReference type="Rhea" id="RHEA-COMP:10439"/>
        <dbReference type="ChEBI" id="CHEBI:15377"/>
        <dbReference type="ChEBI" id="CHEBI:15378"/>
        <dbReference type="ChEBI" id="CHEBI:15379"/>
        <dbReference type="ChEBI" id="CHEBI:29033"/>
        <dbReference type="ChEBI" id="CHEBI:29034"/>
        <dbReference type="ChEBI" id="CHEBI:57756"/>
        <dbReference type="ChEBI" id="CHEBI:83568"/>
    </reaction>
    <physiologicalReaction direction="left-to-right" evidence="2">
        <dbReference type="Rhea" id="RHEA:76484"/>
    </physiologicalReaction>
</comment>
<comment type="catalytic activity">
    <reaction evidence="1">
        <text>(11E)-octadecenoyl-CoA + 2 Fe(II)-[cytochrome b5] + O2 + 2 H(+) = (11E,13Z)-octadecadienoyl-CoA + 2 Fe(III)-[cytochrome b5] + 2 H2O</text>
        <dbReference type="Rhea" id="RHEA:46056"/>
        <dbReference type="Rhea" id="RHEA-COMP:10438"/>
        <dbReference type="Rhea" id="RHEA-COMP:10439"/>
        <dbReference type="ChEBI" id="CHEBI:15377"/>
        <dbReference type="ChEBI" id="CHEBI:15378"/>
        <dbReference type="ChEBI" id="CHEBI:15379"/>
        <dbReference type="ChEBI" id="CHEBI:29033"/>
        <dbReference type="ChEBI" id="CHEBI:29034"/>
        <dbReference type="ChEBI" id="CHEBI:74296"/>
        <dbReference type="ChEBI" id="CHEBI:85650"/>
    </reaction>
    <physiologicalReaction direction="left-to-right" evidence="1">
        <dbReference type="Rhea" id="RHEA:46057"/>
    </physiologicalReaction>
</comment>
<comment type="catalytic activity">
    <reaction evidence="2">
        <text>N-acyl-1-deoxysphinganine + 2 Fe(II)-[cytochrome b5] + O2 + 2 H(+) = N-acyl-1-deoxysphing-14Z-enine + 2 Fe(III)-[cytochrome b5] + 2 H2O</text>
        <dbReference type="Rhea" id="RHEA:76487"/>
        <dbReference type="Rhea" id="RHEA-COMP:10438"/>
        <dbReference type="Rhea" id="RHEA-COMP:10439"/>
        <dbReference type="ChEBI" id="CHEBI:15377"/>
        <dbReference type="ChEBI" id="CHEBI:15378"/>
        <dbReference type="ChEBI" id="CHEBI:15379"/>
        <dbReference type="ChEBI" id="CHEBI:29033"/>
        <dbReference type="ChEBI" id="CHEBI:29034"/>
        <dbReference type="ChEBI" id="CHEBI:67111"/>
        <dbReference type="ChEBI" id="CHEBI:195246"/>
    </reaction>
    <physiologicalReaction direction="left-to-right" evidence="2">
        <dbReference type="Rhea" id="RHEA:76488"/>
    </physiologicalReaction>
</comment>
<comment type="catalytic activity">
    <reaction evidence="2">
        <text>an N-acylsphinganine + 2 Fe(II)-[cytochrome b5] + O2 + 2 H(+) = an N-acylsphing-14Z-enine + 2 Fe(III)-[cytochrome b5] + 2 H2O</text>
        <dbReference type="Rhea" id="RHEA:76563"/>
        <dbReference type="Rhea" id="RHEA-COMP:10438"/>
        <dbReference type="Rhea" id="RHEA-COMP:10439"/>
        <dbReference type="ChEBI" id="CHEBI:15377"/>
        <dbReference type="ChEBI" id="CHEBI:15378"/>
        <dbReference type="ChEBI" id="CHEBI:15379"/>
        <dbReference type="ChEBI" id="CHEBI:29033"/>
        <dbReference type="ChEBI" id="CHEBI:29034"/>
        <dbReference type="ChEBI" id="CHEBI:31488"/>
        <dbReference type="ChEBI" id="CHEBI:195278"/>
    </reaction>
    <physiologicalReaction direction="left-to-right" evidence="2">
        <dbReference type="Rhea" id="RHEA:76564"/>
    </physiologicalReaction>
</comment>
<comment type="pathway">
    <text evidence="1">Lipid metabolism; polyunsaturated fatty acid biosynthesis.</text>
</comment>
<comment type="pathway">
    <text evidence="2">Lipid metabolism; sphingolipid metabolism.</text>
</comment>
<comment type="subcellular location">
    <subcellularLocation>
        <location evidence="2">Endoplasmic reticulum membrane</location>
        <topology evidence="3">Multi-pass membrane protein</topology>
    </subcellularLocation>
</comment>
<comment type="domain">
    <text evidence="2">The protein sequence includes a number of characteristic features of microsomal fatty acid desaturases including the three histidine boxes (these domains may contain the active site and/or be involved in metal ion binding), and the N-terminal cytochrome b5 domain containing the heme-binding motif, HPGG, similar to that of other fatty acid desaturases.</text>
</comment>
<comment type="similarity">
    <text evidence="5">Belongs to the fatty acid desaturase type 1 family.</text>
</comment>
<accession>A4IFP3</accession>
<dbReference type="EC" id="1.14.19.-" evidence="1"/>
<dbReference type="EMBL" id="BC134687">
    <property type="protein sequence ID" value="AAI34688.1"/>
    <property type="molecule type" value="mRNA"/>
</dbReference>
<dbReference type="RefSeq" id="NP_001077160.1">
    <property type="nucleotide sequence ID" value="NM_001083691.2"/>
</dbReference>
<dbReference type="SMR" id="A4IFP3"/>
<dbReference type="FunCoup" id="A4IFP3">
    <property type="interactions" value="713"/>
</dbReference>
<dbReference type="STRING" id="9913.ENSBTAP00000020612"/>
<dbReference type="PaxDb" id="9913-ENSBTAP00000020612"/>
<dbReference type="Ensembl" id="ENSBTAT00000020612.6">
    <property type="protein sequence ID" value="ENSBTAP00000020612.5"/>
    <property type="gene ID" value="ENSBTAG00000015511.7"/>
</dbReference>
<dbReference type="GeneID" id="515925"/>
<dbReference type="KEGG" id="bta:515925"/>
<dbReference type="CTD" id="3995"/>
<dbReference type="VEuPathDB" id="HostDB:ENSBTAG00000015511"/>
<dbReference type="VGNC" id="VGNC:28703">
    <property type="gene designation" value="FADS3"/>
</dbReference>
<dbReference type="eggNOG" id="KOG4232">
    <property type="taxonomic scope" value="Eukaryota"/>
</dbReference>
<dbReference type="GeneTree" id="ENSGT00950000182990"/>
<dbReference type="HOGENOM" id="CLU_016265_0_1_1"/>
<dbReference type="InParanoid" id="A4IFP3"/>
<dbReference type="OMA" id="CGWWMHE"/>
<dbReference type="OrthoDB" id="260091at2759"/>
<dbReference type="TreeFam" id="TF313604"/>
<dbReference type="UniPathway" id="UPA00222"/>
<dbReference type="UniPathway" id="UPA00658"/>
<dbReference type="Proteomes" id="UP000009136">
    <property type="component" value="Chromosome 29"/>
</dbReference>
<dbReference type="GO" id="GO:0005789">
    <property type="term" value="C:endoplasmic reticulum membrane"/>
    <property type="evidence" value="ECO:0007669"/>
    <property type="project" value="UniProtKB-SubCell"/>
</dbReference>
<dbReference type="GO" id="GO:0016717">
    <property type="term" value="F:oxidoreductase activity, acting on paired donors, with oxidation of a pair of donors resulting in the reduction of molecular oxygen to two molecules of water"/>
    <property type="evidence" value="ECO:0000318"/>
    <property type="project" value="GO_Central"/>
</dbReference>
<dbReference type="GO" id="GO:0006629">
    <property type="term" value="P:lipid metabolic process"/>
    <property type="evidence" value="ECO:0000318"/>
    <property type="project" value="GO_Central"/>
</dbReference>
<dbReference type="GO" id="GO:0006665">
    <property type="term" value="P:sphingolipid metabolic process"/>
    <property type="evidence" value="ECO:0007669"/>
    <property type="project" value="UniProtKB-UniPathway"/>
</dbReference>
<dbReference type="GO" id="GO:0006636">
    <property type="term" value="P:unsaturated fatty acid biosynthetic process"/>
    <property type="evidence" value="ECO:0007669"/>
    <property type="project" value="UniProtKB-UniPathway"/>
</dbReference>
<dbReference type="CDD" id="cd03506">
    <property type="entry name" value="Delta6-FADS-like"/>
    <property type="match status" value="1"/>
</dbReference>
<dbReference type="Gene3D" id="3.10.120.10">
    <property type="entry name" value="Cytochrome b5-like heme/steroid binding domain"/>
    <property type="match status" value="1"/>
</dbReference>
<dbReference type="InterPro" id="IPR001199">
    <property type="entry name" value="Cyt_B5-like_heme/steroid-bd"/>
</dbReference>
<dbReference type="InterPro" id="IPR036400">
    <property type="entry name" value="Cyt_B5-like_heme/steroid_sf"/>
</dbReference>
<dbReference type="InterPro" id="IPR005804">
    <property type="entry name" value="FA_desaturase_dom"/>
</dbReference>
<dbReference type="InterPro" id="IPR012171">
    <property type="entry name" value="Fatty_acid_desaturase"/>
</dbReference>
<dbReference type="PANTHER" id="PTHR19353">
    <property type="entry name" value="FATTY ACID DESATURASE 2"/>
    <property type="match status" value="1"/>
</dbReference>
<dbReference type="PANTHER" id="PTHR19353:SF11">
    <property type="entry name" value="FATTY ACID DESATURASE 3"/>
    <property type="match status" value="1"/>
</dbReference>
<dbReference type="Pfam" id="PF00173">
    <property type="entry name" value="Cyt-b5"/>
    <property type="match status" value="1"/>
</dbReference>
<dbReference type="Pfam" id="PF00487">
    <property type="entry name" value="FA_desaturase"/>
    <property type="match status" value="1"/>
</dbReference>
<dbReference type="PIRSF" id="PIRSF015921">
    <property type="entry name" value="FA_sphinglp_des"/>
    <property type="match status" value="1"/>
</dbReference>
<dbReference type="SMART" id="SM01117">
    <property type="entry name" value="Cyt-b5"/>
    <property type="match status" value="1"/>
</dbReference>
<dbReference type="SUPFAM" id="SSF55856">
    <property type="entry name" value="Cytochrome b5-like heme/steroid binding domain"/>
    <property type="match status" value="1"/>
</dbReference>
<dbReference type="PROSITE" id="PS50255">
    <property type="entry name" value="CYTOCHROME_B5_2"/>
    <property type="match status" value="1"/>
</dbReference>
<proteinExistence type="evidence at transcript level"/>
<evidence type="ECO:0000250" key="1">
    <source>
        <dbReference type="UniProtKB" id="Q8K1P9"/>
    </source>
</evidence>
<evidence type="ECO:0000250" key="2">
    <source>
        <dbReference type="UniProtKB" id="Q9Y5Q0"/>
    </source>
</evidence>
<evidence type="ECO:0000255" key="3"/>
<evidence type="ECO:0000255" key="4">
    <source>
        <dbReference type="PROSITE-ProRule" id="PRU00279"/>
    </source>
</evidence>
<evidence type="ECO:0000305" key="5"/>
<sequence length="443" mass="51306">MGGVGEPDWEPGQRGAPLPTLRWEQVRRHNLPGDKWLVIERRVYDISRWAQRHPGGSRLIGHHGAEDATDAFHAFHQDLSFVRKFLQPLLIGELAPEEPSQDGPQNTQLIEDFRALRQAVEDMKLFEAKPAFFGLLLGHILAMEVLAWLMIYMLGPGWVPSTLAALILAISQAQSWCLQHDLGHTSIFRNSRWNHLAQQFVMGQLKGFSAHWWNFRHFQHHAKPNIFHKDPDVTVAPVFLLGESSVEYGKKKRRYLPYNHQHLYFFLIGPPLLTLVNFEVENLAYMLVCMQWMDLLWAASFYARFLLSYIPFYGIPGALLLFVAVRVLESHWFVWITQMNHIPREIGHEKHRDWASSQLAATCNVEPSLFIDWFSGHLNFQIEHHLFPTMPRHNYRRVAPLVKALCAKHGLSYEVKPFLTALVDIIRSLKKSGNVWLEAYLHQ</sequence>
<reference key="1">
    <citation type="submission" date="2007-03" db="EMBL/GenBank/DDBJ databases">
        <authorList>
            <consortium name="NIH - Mammalian Gene Collection (MGC) project"/>
        </authorList>
    </citation>
    <scope>NUCLEOTIDE SEQUENCE [LARGE SCALE MRNA]</scope>
    <source>
        <strain>Hereford</strain>
        <tissue>Fetal muscle</tissue>
    </source>
</reference>
<name>FADS3_BOVIN</name>
<organism>
    <name type="scientific">Bos taurus</name>
    <name type="common">Bovine</name>
    <dbReference type="NCBI Taxonomy" id="9913"/>
    <lineage>
        <taxon>Eukaryota</taxon>
        <taxon>Metazoa</taxon>
        <taxon>Chordata</taxon>
        <taxon>Craniata</taxon>
        <taxon>Vertebrata</taxon>
        <taxon>Euteleostomi</taxon>
        <taxon>Mammalia</taxon>
        <taxon>Eutheria</taxon>
        <taxon>Laurasiatheria</taxon>
        <taxon>Artiodactyla</taxon>
        <taxon>Ruminantia</taxon>
        <taxon>Pecora</taxon>
        <taxon>Bovidae</taxon>
        <taxon>Bovinae</taxon>
        <taxon>Bos</taxon>
    </lineage>
</organism>
<keyword id="KW-0249">Electron transport</keyword>
<keyword id="KW-0256">Endoplasmic reticulum</keyword>
<keyword id="KW-0275">Fatty acid biosynthesis</keyword>
<keyword id="KW-0276">Fatty acid metabolism</keyword>
<keyword id="KW-0444">Lipid biosynthesis</keyword>
<keyword id="KW-0443">Lipid metabolism</keyword>
<keyword id="KW-0472">Membrane</keyword>
<keyword id="KW-0560">Oxidoreductase</keyword>
<keyword id="KW-1185">Reference proteome</keyword>
<keyword id="KW-0812">Transmembrane</keyword>
<keyword id="KW-1133">Transmembrane helix</keyword>
<keyword id="KW-0813">Transport</keyword>